<organism>
    <name type="scientific">Encephalitozoon cuniculi (strain GB-M1)</name>
    <name type="common">Microsporidian parasite</name>
    <dbReference type="NCBI Taxonomy" id="284813"/>
    <lineage>
        <taxon>Eukaryota</taxon>
        <taxon>Fungi</taxon>
        <taxon>Fungi incertae sedis</taxon>
        <taxon>Microsporidia</taxon>
        <taxon>Unikaryonidae</taxon>
        <taxon>Encephalitozoon</taxon>
    </lineage>
</organism>
<protein>
    <recommendedName>
        <fullName>UPF0328 protein ECU03_0130</fullName>
    </recommendedName>
</protein>
<gene>
    <name type="ordered locus">ECU03_0130</name>
</gene>
<proteinExistence type="inferred from homology"/>
<keyword id="KW-1185">Reference proteome</keyword>
<evidence type="ECO:0000305" key="1"/>
<sequence length="266" mass="29421">MNANSDKPLEANQEISEAKRKKIPNSFLACMSIISSLFVYSISEENEIKSSLALRFIVTSSTFSYVIFSFSSCLHANLMLWKSDIKESSVTQKILYFLVNIISVVLIVASLLSIVGIPINSWTYTKGPLTALFPSLVLFDYLASSLLNSALGAVSLTDSNNHLDLVLLLLSSFLITSREWDNDFECSLYLSIASSIILLIMSLEDEDALPSTEEPSFVARTKVVIFTIVLLLVAIIHVFLGCISIGIIVDAIKKGLFSMHNTNKRY</sequence>
<comment type="similarity">
    <text evidence="1">Belongs to the UPF0328 family.</text>
</comment>
<reference key="1">
    <citation type="journal article" date="2001" name="Nature">
        <title>Genome sequence and gene compaction of the eukaryote parasite Encephalitozoon cuniculi.</title>
        <authorList>
            <person name="Katinka M.D."/>
            <person name="Duprat S."/>
            <person name="Cornillot E."/>
            <person name="Metenier G."/>
            <person name="Thomarat F."/>
            <person name="Prensier G."/>
            <person name="Barbe V."/>
            <person name="Peyretaillade E."/>
            <person name="Brottier P."/>
            <person name="Wincker P."/>
            <person name="Delbac F."/>
            <person name="El Alaoui H."/>
            <person name="Peyret P."/>
            <person name="Saurin W."/>
            <person name="Gouy M."/>
            <person name="Weissenbach J."/>
            <person name="Vivares C.P."/>
        </authorList>
    </citation>
    <scope>NUCLEOTIDE SEQUENCE [LARGE SCALE GENOMIC DNA]</scope>
    <source>
        <strain>GB-M1</strain>
    </source>
</reference>
<feature type="chain" id="PRO_0000223120" description="UPF0328 protein ECU03_0130">
    <location>
        <begin position="1"/>
        <end position="266"/>
    </location>
</feature>
<accession>Q8SW74</accession>
<name>Y313_ENCCU</name>
<dbReference type="EMBL" id="AL590443">
    <property type="protein sequence ID" value="CAD26160.1"/>
    <property type="molecule type" value="Genomic_DNA"/>
</dbReference>
<dbReference type="RefSeq" id="NP_597525.1">
    <property type="nucleotide sequence ID" value="NM_001040889.1"/>
</dbReference>
<dbReference type="GeneID" id="858687"/>
<dbReference type="KEGG" id="ecu:ECU03_0130"/>
<dbReference type="VEuPathDB" id="MicrosporidiaDB:ECU03_0130"/>
<dbReference type="HOGENOM" id="CLU_1045949_0_0_1"/>
<dbReference type="InParanoid" id="Q8SW74"/>
<dbReference type="Proteomes" id="UP000000819">
    <property type="component" value="Chromosome III"/>
</dbReference>
<dbReference type="InterPro" id="IPR019081">
    <property type="entry name" value="UPF0328"/>
</dbReference>
<dbReference type="Pfam" id="PF09591">
    <property type="entry name" value="DUF2463"/>
    <property type="match status" value="1"/>
</dbReference>